<keyword id="KW-0963">Cytoplasm</keyword>
<keyword id="KW-0570">Pentose shunt</keyword>
<keyword id="KW-1185">Reference proteome</keyword>
<keyword id="KW-0704">Schiff base</keyword>
<keyword id="KW-0808">Transferase</keyword>
<gene>
    <name evidence="1" type="primary">tal</name>
    <name type="ordered locus">CTC_00228</name>
</gene>
<name>TAL_CLOTE</name>
<evidence type="ECO:0000255" key="1">
    <source>
        <dbReference type="HAMAP-Rule" id="MF_00494"/>
    </source>
</evidence>
<evidence type="ECO:0000305" key="2"/>
<feature type="chain" id="PRO_0000173666" description="Probable transaldolase">
    <location>
        <begin position="1"/>
        <end position="214"/>
    </location>
</feature>
<feature type="active site" description="Schiff-base intermediate with substrate" evidence="1">
    <location>
        <position position="83"/>
    </location>
</feature>
<proteinExistence type="inferred from homology"/>
<sequence length="214" mass="23568">MKFFIDTANVEEIKKVAKWGVLDGVTTNPTLIAREGRDLKEVIEEICSIVDGPISAEVISLESEKMVEEAKELIKIHKNIVIKVPMCEEGLKAVSELTKLGIKTNVTLIFSAQQALLAAKAGATYVSPFLGRIDDIGSFGIQLVEDIVTIFTNFGIESEIICASIRTPIHVLECARVGGDIATVPYKVFAQMLKHPLTDRGIEQFLEDYKSMNK</sequence>
<protein>
    <recommendedName>
        <fullName evidence="1">Probable transaldolase</fullName>
        <ecNumber evidence="1">2.2.1.2</ecNumber>
    </recommendedName>
</protein>
<dbReference type="EC" id="2.2.1.2" evidence="1"/>
<dbReference type="EMBL" id="AE015927">
    <property type="protein sequence ID" value="AAO34876.1"/>
    <property type="status" value="ALT_INIT"/>
    <property type="molecule type" value="Genomic_DNA"/>
</dbReference>
<dbReference type="SMR" id="Q899F3"/>
<dbReference type="STRING" id="212717.CTC_00228"/>
<dbReference type="GeneID" id="24252648"/>
<dbReference type="KEGG" id="ctc:CTC_00228"/>
<dbReference type="HOGENOM" id="CLU_079764_0_0_9"/>
<dbReference type="OrthoDB" id="9807051at2"/>
<dbReference type="UniPathway" id="UPA00115">
    <property type="reaction ID" value="UER00414"/>
</dbReference>
<dbReference type="Proteomes" id="UP000001412">
    <property type="component" value="Chromosome"/>
</dbReference>
<dbReference type="GO" id="GO:0005737">
    <property type="term" value="C:cytoplasm"/>
    <property type="evidence" value="ECO:0007669"/>
    <property type="project" value="UniProtKB-SubCell"/>
</dbReference>
<dbReference type="GO" id="GO:0016832">
    <property type="term" value="F:aldehyde-lyase activity"/>
    <property type="evidence" value="ECO:0007669"/>
    <property type="project" value="InterPro"/>
</dbReference>
<dbReference type="GO" id="GO:0004801">
    <property type="term" value="F:transaldolase activity"/>
    <property type="evidence" value="ECO:0007669"/>
    <property type="project" value="UniProtKB-UniRule"/>
</dbReference>
<dbReference type="GO" id="GO:0005975">
    <property type="term" value="P:carbohydrate metabolic process"/>
    <property type="evidence" value="ECO:0007669"/>
    <property type="project" value="InterPro"/>
</dbReference>
<dbReference type="GO" id="GO:0006098">
    <property type="term" value="P:pentose-phosphate shunt"/>
    <property type="evidence" value="ECO:0007669"/>
    <property type="project" value="UniProtKB-UniRule"/>
</dbReference>
<dbReference type="CDD" id="cd00956">
    <property type="entry name" value="Transaldolase_FSA"/>
    <property type="match status" value="1"/>
</dbReference>
<dbReference type="FunFam" id="3.20.20.70:FF:000018">
    <property type="entry name" value="Probable transaldolase"/>
    <property type="match status" value="1"/>
</dbReference>
<dbReference type="Gene3D" id="3.20.20.70">
    <property type="entry name" value="Aldolase class I"/>
    <property type="match status" value="1"/>
</dbReference>
<dbReference type="HAMAP" id="MF_00494">
    <property type="entry name" value="Transaldolase_3b"/>
    <property type="match status" value="1"/>
</dbReference>
<dbReference type="InterPro" id="IPR013785">
    <property type="entry name" value="Aldolase_TIM"/>
</dbReference>
<dbReference type="InterPro" id="IPR001585">
    <property type="entry name" value="TAL/FSA"/>
</dbReference>
<dbReference type="InterPro" id="IPR022999">
    <property type="entry name" value="Transaldolase_3B"/>
</dbReference>
<dbReference type="InterPro" id="IPR004731">
    <property type="entry name" value="Transaldolase_3B/F6P_aldolase"/>
</dbReference>
<dbReference type="InterPro" id="IPR018225">
    <property type="entry name" value="Transaldolase_AS"/>
</dbReference>
<dbReference type="InterPro" id="IPR033919">
    <property type="entry name" value="TSA/FSA_arc/bac"/>
</dbReference>
<dbReference type="NCBIfam" id="TIGR00875">
    <property type="entry name" value="fsa_talC_mipB"/>
    <property type="match status" value="1"/>
</dbReference>
<dbReference type="PANTHER" id="PTHR10683">
    <property type="entry name" value="TRANSALDOLASE"/>
    <property type="match status" value="1"/>
</dbReference>
<dbReference type="PANTHER" id="PTHR10683:SF36">
    <property type="entry name" value="TRANSALDOLASE"/>
    <property type="match status" value="1"/>
</dbReference>
<dbReference type="Pfam" id="PF00923">
    <property type="entry name" value="TAL_FSA"/>
    <property type="match status" value="1"/>
</dbReference>
<dbReference type="SUPFAM" id="SSF51569">
    <property type="entry name" value="Aldolase"/>
    <property type="match status" value="1"/>
</dbReference>
<dbReference type="PROSITE" id="PS01054">
    <property type="entry name" value="TRANSALDOLASE_1"/>
    <property type="match status" value="1"/>
</dbReference>
<dbReference type="PROSITE" id="PS00958">
    <property type="entry name" value="TRANSALDOLASE_2"/>
    <property type="match status" value="1"/>
</dbReference>
<comment type="function">
    <text evidence="1">Transaldolase is important for the balance of metabolites in the pentose-phosphate pathway.</text>
</comment>
<comment type="catalytic activity">
    <reaction evidence="1">
        <text>D-sedoheptulose 7-phosphate + D-glyceraldehyde 3-phosphate = D-erythrose 4-phosphate + beta-D-fructose 6-phosphate</text>
        <dbReference type="Rhea" id="RHEA:17053"/>
        <dbReference type="ChEBI" id="CHEBI:16897"/>
        <dbReference type="ChEBI" id="CHEBI:57483"/>
        <dbReference type="ChEBI" id="CHEBI:57634"/>
        <dbReference type="ChEBI" id="CHEBI:59776"/>
        <dbReference type="EC" id="2.2.1.2"/>
    </reaction>
</comment>
<comment type="pathway">
    <text evidence="1">Carbohydrate degradation; pentose phosphate pathway; D-glyceraldehyde 3-phosphate and beta-D-fructose 6-phosphate from D-ribose 5-phosphate and D-xylulose 5-phosphate (non-oxidative stage): step 2/3.</text>
</comment>
<comment type="subcellular location">
    <subcellularLocation>
        <location evidence="1">Cytoplasm</location>
    </subcellularLocation>
</comment>
<comment type="similarity">
    <text evidence="1">Belongs to the transaldolase family. Type 3B subfamily.</text>
</comment>
<comment type="sequence caution" evidence="2">
    <conflict type="erroneous initiation">
        <sequence resource="EMBL-CDS" id="AAO34876"/>
    </conflict>
    <text>Extended N-terminus.</text>
</comment>
<reference key="1">
    <citation type="journal article" date="2003" name="Proc. Natl. Acad. Sci. U.S.A.">
        <title>The genome sequence of Clostridium tetani, the causative agent of tetanus disease.</title>
        <authorList>
            <person name="Brueggemann H."/>
            <person name="Baeumer S."/>
            <person name="Fricke W.F."/>
            <person name="Wiezer A."/>
            <person name="Liesegang H."/>
            <person name="Decker I."/>
            <person name="Herzberg C."/>
            <person name="Martinez-Arias R."/>
            <person name="Merkl R."/>
            <person name="Henne A."/>
            <person name="Gottschalk G."/>
        </authorList>
    </citation>
    <scope>NUCLEOTIDE SEQUENCE [LARGE SCALE GENOMIC DNA]</scope>
    <source>
        <strain>Massachusetts / E88</strain>
    </source>
</reference>
<accession>Q899F3</accession>
<organism>
    <name type="scientific">Clostridium tetani (strain Massachusetts / E88)</name>
    <dbReference type="NCBI Taxonomy" id="212717"/>
    <lineage>
        <taxon>Bacteria</taxon>
        <taxon>Bacillati</taxon>
        <taxon>Bacillota</taxon>
        <taxon>Clostridia</taxon>
        <taxon>Eubacteriales</taxon>
        <taxon>Clostridiaceae</taxon>
        <taxon>Clostridium</taxon>
    </lineage>
</organism>